<evidence type="ECO:0000250" key="1">
    <source>
        <dbReference type="UniProtKB" id="P08037"/>
    </source>
</evidence>
<evidence type="ECO:0000250" key="2">
    <source>
        <dbReference type="UniProtKB" id="P15291"/>
    </source>
</evidence>
<evidence type="ECO:0000250" key="3">
    <source>
        <dbReference type="UniProtKB" id="P15535"/>
    </source>
</evidence>
<evidence type="ECO:0000305" key="4"/>
<evidence type="ECO:0000312" key="5">
    <source>
        <dbReference type="RGD" id="620900"/>
    </source>
</evidence>
<organism>
    <name type="scientific">Rattus norvegicus</name>
    <name type="common">Rat</name>
    <dbReference type="NCBI Taxonomy" id="10116"/>
    <lineage>
        <taxon>Eukaryota</taxon>
        <taxon>Metazoa</taxon>
        <taxon>Chordata</taxon>
        <taxon>Craniata</taxon>
        <taxon>Vertebrata</taxon>
        <taxon>Euteleostomi</taxon>
        <taxon>Mammalia</taxon>
        <taxon>Eutheria</taxon>
        <taxon>Euarchontoglires</taxon>
        <taxon>Glires</taxon>
        <taxon>Rodentia</taxon>
        <taxon>Myomorpha</taxon>
        <taxon>Muroidea</taxon>
        <taxon>Muridae</taxon>
        <taxon>Murinae</taxon>
        <taxon>Rattus</taxon>
    </lineage>
</organism>
<name>B4GT1_RAT</name>
<dbReference type="EC" id="2.4.1.-"/>
<dbReference type="EC" id="2.4.1.38"/>
<dbReference type="EC" id="2.4.1.22"/>
<dbReference type="EC" id="2.4.1.90"/>
<dbReference type="EC" id="2.4.1.275" evidence="1"/>
<dbReference type="PIR" id="S36825">
    <property type="entry name" value="S36825"/>
</dbReference>
<dbReference type="UCSC" id="RGD:620900">
    <property type="organism name" value="rat"/>
</dbReference>
<dbReference type="AGR" id="RGD:620900"/>
<dbReference type="RGD" id="620900">
    <property type="gene designation" value="B4galt1"/>
</dbReference>
<dbReference type="InParanoid" id="P80225"/>
<dbReference type="BRENDA" id="2.4.1.133">
    <property type="organism ID" value="5301"/>
</dbReference>
<dbReference type="BRENDA" id="2.4.1.38">
    <property type="organism ID" value="5301"/>
</dbReference>
<dbReference type="SABIO-RK" id="P80225"/>
<dbReference type="UniPathway" id="UPA00378"/>
<dbReference type="Proteomes" id="UP000002494">
    <property type="component" value="Unplaced"/>
</dbReference>
<dbReference type="GO" id="GO:0016323">
    <property type="term" value="C:basolateral plasma membrane"/>
    <property type="evidence" value="ECO:0000266"/>
    <property type="project" value="RGD"/>
</dbReference>
<dbReference type="GO" id="GO:0031526">
    <property type="term" value="C:brush border membrane"/>
    <property type="evidence" value="ECO:0000266"/>
    <property type="project" value="RGD"/>
</dbReference>
<dbReference type="GO" id="GO:0009986">
    <property type="term" value="C:cell surface"/>
    <property type="evidence" value="ECO:0000266"/>
    <property type="project" value="RGD"/>
</dbReference>
<dbReference type="GO" id="GO:0030057">
    <property type="term" value="C:desmosome"/>
    <property type="evidence" value="ECO:0000266"/>
    <property type="project" value="RGD"/>
</dbReference>
<dbReference type="GO" id="GO:0009897">
    <property type="term" value="C:external side of plasma membrane"/>
    <property type="evidence" value="ECO:0000266"/>
    <property type="project" value="RGD"/>
</dbReference>
<dbReference type="GO" id="GO:0005576">
    <property type="term" value="C:extracellular region"/>
    <property type="evidence" value="ECO:0007669"/>
    <property type="project" value="UniProtKB-SubCell"/>
</dbReference>
<dbReference type="GO" id="GO:0030175">
    <property type="term" value="C:filopodium"/>
    <property type="evidence" value="ECO:0007669"/>
    <property type="project" value="UniProtKB-SubCell"/>
</dbReference>
<dbReference type="GO" id="GO:0005794">
    <property type="term" value="C:Golgi apparatus"/>
    <property type="evidence" value="ECO:0000266"/>
    <property type="project" value="RGD"/>
</dbReference>
<dbReference type="GO" id="GO:0032580">
    <property type="term" value="C:Golgi cisterna membrane"/>
    <property type="evidence" value="ECO:0007669"/>
    <property type="project" value="UniProtKB-SubCell"/>
</dbReference>
<dbReference type="GO" id="GO:0000138">
    <property type="term" value="C:Golgi trans cisterna"/>
    <property type="evidence" value="ECO:0000266"/>
    <property type="project" value="RGD"/>
</dbReference>
<dbReference type="GO" id="GO:0005886">
    <property type="term" value="C:plasma membrane"/>
    <property type="evidence" value="ECO:0000266"/>
    <property type="project" value="RGD"/>
</dbReference>
<dbReference type="GO" id="GO:0032991">
    <property type="term" value="C:protein-containing complex"/>
    <property type="evidence" value="ECO:0000266"/>
    <property type="project" value="RGD"/>
</dbReference>
<dbReference type="GO" id="GO:0003831">
    <property type="term" value="F:beta-N-acetylglucosaminylglycopeptide beta-1,4-galactosyltransferase activity"/>
    <property type="evidence" value="ECO:0000250"/>
    <property type="project" value="UniProtKB"/>
</dbReference>
<dbReference type="GO" id="GO:0008378">
    <property type="term" value="F:galactosyltransferase activity"/>
    <property type="evidence" value="ECO:0000266"/>
    <property type="project" value="RGD"/>
</dbReference>
<dbReference type="GO" id="GO:0004461">
    <property type="term" value="F:lactose synthase activity"/>
    <property type="evidence" value="ECO:0000266"/>
    <property type="project" value="RGD"/>
</dbReference>
<dbReference type="GO" id="GO:0030145">
    <property type="term" value="F:manganese ion binding"/>
    <property type="evidence" value="ECO:0000266"/>
    <property type="project" value="RGD"/>
</dbReference>
<dbReference type="GO" id="GO:0003945">
    <property type="term" value="F:N-acetyllactosamine synthase activity"/>
    <property type="evidence" value="ECO:0000266"/>
    <property type="project" value="RGD"/>
</dbReference>
<dbReference type="GO" id="GO:0035250">
    <property type="term" value="F:UDP-galactosyltransferase activity"/>
    <property type="evidence" value="ECO:0000250"/>
    <property type="project" value="UniProtKB"/>
</dbReference>
<dbReference type="GO" id="GO:0002526">
    <property type="term" value="P:acute inflammatory response"/>
    <property type="evidence" value="ECO:0000266"/>
    <property type="project" value="RGD"/>
</dbReference>
<dbReference type="GO" id="GO:0060055">
    <property type="term" value="P:angiogenesis involved in wound healing"/>
    <property type="evidence" value="ECO:0000266"/>
    <property type="project" value="RGD"/>
</dbReference>
<dbReference type="GO" id="GO:0007339">
    <property type="term" value="P:binding of sperm to zona pellucida"/>
    <property type="evidence" value="ECO:0000266"/>
    <property type="project" value="RGD"/>
</dbReference>
<dbReference type="GO" id="GO:0007155">
    <property type="term" value="P:cell adhesion"/>
    <property type="evidence" value="ECO:0000266"/>
    <property type="project" value="RGD"/>
</dbReference>
<dbReference type="GO" id="GO:0008283">
    <property type="term" value="P:cell population proliferation"/>
    <property type="evidence" value="ECO:0000266"/>
    <property type="project" value="RGD"/>
</dbReference>
<dbReference type="GO" id="GO:0045136">
    <property type="term" value="P:development of secondary sexual characteristics"/>
    <property type="evidence" value="ECO:0000266"/>
    <property type="project" value="RGD"/>
</dbReference>
<dbReference type="GO" id="GO:0002064">
    <property type="term" value="P:epithelial cell development"/>
    <property type="evidence" value="ECO:0000266"/>
    <property type="project" value="RGD"/>
</dbReference>
<dbReference type="GO" id="GO:0050673">
    <property type="term" value="P:epithelial cell proliferation"/>
    <property type="evidence" value="ECO:0000266"/>
    <property type="project" value="RGD"/>
</dbReference>
<dbReference type="GO" id="GO:0030198">
    <property type="term" value="P:extracellular matrix organization"/>
    <property type="evidence" value="ECO:0000266"/>
    <property type="project" value="RGD"/>
</dbReference>
<dbReference type="GO" id="GO:0006012">
    <property type="term" value="P:galactose metabolic process"/>
    <property type="evidence" value="ECO:0000266"/>
    <property type="project" value="RGD"/>
</dbReference>
<dbReference type="GO" id="GO:0009101">
    <property type="term" value="P:glycoprotein biosynthetic process"/>
    <property type="evidence" value="ECO:0000266"/>
    <property type="project" value="RGD"/>
</dbReference>
<dbReference type="GO" id="GO:0005989">
    <property type="term" value="P:lactose biosynthetic process"/>
    <property type="evidence" value="ECO:0000266"/>
    <property type="project" value="RGD"/>
</dbReference>
<dbReference type="GO" id="GO:0006629">
    <property type="term" value="P:lipid metabolic process"/>
    <property type="evidence" value="ECO:0000250"/>
    <property type="project" value="UniProtKB"/>
</dbReference>
<dbReference type="GO" id="GO:1905517">
    <property type="term" value="P:macrophage migration"/>
    <property type="evidence" value="ECO:0000266"/>
    <property type="project" value="RGD"/>
</dbReference>
<dbReference type="GO" id="GO:0050680">
    <property type="term" value="P:negative regulation of epithelial cell proliferation"/>
    <property type="evidence" value="ECO:0000266"/>
    <property type="project" value="RGD"/>
</dbReference>
<dbReference type="GO" id="GO:0009312">
    <property type="term" value="P:oligosaccharide biosynthetic process"/>
    <property type="evidence" value="ECO:0000266"/>
    <property type="project" value="RGD"/>
</dbReference>
<dbReference type="GO" id="GO:0007341">
    <property type="term" value="P:penetration of zona pellucida"/>
    <property type="evidence" value="ECO:0000266"/>
    <property type="project" value="RGD"/>
</dbReference>
<dbReference type="GO" id="GO:0043065">
    <property type="term" value="P:positive regulation of apoptotic process"/>
    <property type="evidence" value="ECO:0000266"/>
    <property type="project" value="RGD"/>
</dbReference>
<dbReference type="GO" id="GO:0061755">
    <property type="term" value="P:positive regulation of circulating fibrinogen levels"/>
    <property type="evidence" value="ECO:0000250"/>
    <property type="project" value="UniProtKB"/>
</dbReference>
<dbReference type="GO" id="GO:0060054">
    <property type="term" value="P:positive regulation of epithelial cell proliferation involved in wound healing"/>
    <property type="evidence" value="ECO:0000266"/>
    <property type="project" value="RGD"/>
</dbReference>
<dbReference type="GO" id="GO:0006486">
    <property type="term" value="P:protein glycosylation"/>
    <property type="evidence" value="ECO:0000266"/>
    <property type="project" value="RGD"/>
</dbReference>
<dbReference type="GO" id="GO:0006487">
    <property type="term" value="P:protein N-linked glycosylation"/>
    <property type="evidence" value="ECO:0000266"/>
    <property type="project" value="RGD"/>
</dbReference>
<dbReference type="GO" id="GO:0060046">
    <property type="term" value="P:regulation of acrosome reaction"/>
    <property type="evidence" value="ECO:0000266"/>
    <property type="project" value="RGD"/>
</dbReference>
<dbReference type="GO" id="GO:0042060">
    <property type="term" value="P:wound healing"/>
    <property type="evidence" value="ECO:0000266"/>
    <property type="project" value="RGD"/>
</dbReference>
<proteinExistence type="evidence at protein level"/>
<sequence>PGATLQXAXXLLVAVXAXPPPPLGVXPKPXPG</sequence>
<reference key="1">
    <citation type="journal article" date="1993" name="Eur. J. Biochem.">
        <title>Proteins of the Golgi apparatus. Purification to homogeneity, N-terminal sequence, and unusually large Stokes radius of the membrane-bound form of UDP-galactose:N-acetylglucosamine beta 1-4galactosyltransferase from rat liver.</title>
        <authorList>
            <person name="Bendiak B."/>
            <person name="Ward L.D."/>
            <person name="Simpson R.J."/>
        </authorList>
    </citation>
    <scope>PROTEIN SEQUENCE</scope>
    <source>
        <tissue>Liver</tissue>
    </source>
</reference>
<protein>
    <recommendedName>
        <fullName evidence="4">Beta-1,4-galactosyltransferase 1</fullName>
        <shortName>Beta-1,4-GalTase 1</shortName>
        <shortName>Beta4Gal-T1</shortName>
        <shortName>b4Gal-T1</shortName>
        <ecNumber>2.4.1.-</ecNumber>
    </recommendedName>
    <alternativeName>
        <fullName>Beta-N-acetylglucosaminyl-glycolipid beta-1,4-galactosyltransferase</fullName>
    </alternativeName>
    <alternativeName>
        <fullName>Beta-N-acetylglucosaminylglycopeptide beta-1,4-galactosyltransferase</fullName>
        <ecNumber>2.4.1.38</ecNumber>
    </alternativeName>
    <alternativeName>
        <fullName>Lactose synthase A protein</fullName>
        <ecNumber>2.4.1.22</ecNumber>
    </alternativeName>
    <alternativeName>
        <fullName>N-acetyllactosamine synthase</fullName>
        <ecNumber>2.4.1.90</ecNumber>
    </alternativeName>
    <alternativeName>
        <fullName>Nal synthase</fullName>
    </alternativeName>
    <alternativeName>
        <fullName>Neolactotriaosylceramide beta-1,4-galactosyltransferase</fullName>
        <ecNumber evidence="1">2.4.1.275</ecNumber>
    </alternativeName>
    <alternativeName>
        <fullName>UDP-Gal:beta-GlcNAc beta-1,4-galactosyltransferase 1</fullName>
    </alternativeName>
    <alternativeName>
        <fullName>UDP-galactose:beta-N-acetylglucosamine beta-1,4-galactosyltransferase 1</fullName>
    </alternativeName>
</protein>
<gene>
    <name evidence="5" type="primary">B4galt1</name>
    <name type="synonym">Ggtb2</name>
</gene>
<feature type="chain" id="PRO_0000080531" description="Beta-1,4-galactosyltransferase 1">
    <location>
        <begin position="1"/>
        <end position="32" status="greater than"/>
    </location>
</feature>
<feature type="non-consecutive residues" evidence="4">
    <location>
        <begin position="15"/>
        <end position="16"/>
    </location>
</feature>
<feature type="non-terminal residue">
    <location>
        <position position="32"/>
    </location>
</feature>
<comment type="function">
    <text evidence="1">This protein is responsible for the synthesis of complex-type N-linked oligosaccharides in many glycoproteins as well as the carbohydrate moieties of glycolipids.</text>
</comment>
<comment type="catalytic activity">
    <reaction evidence="1">
        <text>D-glucose + UDP-alpha-D-galactose = lactose + UDP + H(+)</text>
        <dbReference type="Rhea" id="RHEA:12404"/>
        <dbReference type="ChEBI" id="CHEBI:4167"/>
        <dbReference type="ChEBI" id="CHEBI:15378"/>
        <dbReference type="ChEBI" id="CHEBI:17716"/>
        <dbReference type="ChEBI" id="CHEBI:58223"/>
        <dbReference type="ChEBI" id="CHEBI:66914"/>
        <dbReference type="EC" id="2.4.1.22"/>
    </reaction>
    <physiologicalReaction direction="left-to-right" evidence="1">
        <dbReference type="Rhea" id="RHEA:12405"/>
    </physiologicalReaction>
</comment>
<comment type="catalytic activity">
    <reaction evidence="1">
        <text>an N-acetyl-beta-D-glucosaminyl derivative + UDP-alpha-D-galactose = a beta-D-galactosyl-(1-&gt;4)-N-acetyl-beta-D-glucosaminyl derivative + UDP + H(+)</text>
        <dbReference type="Rhea" id="RHEA:22932"/>
        <dbReference type="ChEBI" id="CHEBI:15378"/>
        <dbReference type="ChEBI" id="CHEBI:58223"/>
        <dbReference type="ChEBI" id="CHEBI:61631"/>
        <dbReference type="ChEBI" id="CHEBI:66914"/>
        <dbReference type="ChEBI" id="CHEBI:133507"/>
        <dbReference type="EC" id="2.4.1.38"/>
    </reaction>
    <physiologicalReaction direction="left-to-right" evidence="1">
        <dbReference type="Rhea" id="RHEA:22933"/>
    </physiologicalReaction>
</comment>
<comment type="catalytic activity">
    <reaction evidence="1">
        <text>N-acetyl-D-glucosamine + UDP-alpha-D-galactose = beta-D-galactosyl-(1-&gt;4)-N-acetyl-D-glucosamine + UDP + H(+)</text>
        <dbReference type="Rhea" id="RHEA:17745"/>
        <dbReference type="ChEBI" id="CHEBI:15378"/>
        <dbReference type="ChEBI" id="CHEBI:58223"/>
        <dbReference type="ChEBI" id="CHEBI:60152"/>
        <dbReference type="ChEBI" id="CHEBI:66914"/>
        <dbReference type="ChEBI" id="CHEBI:506227"/>
        <dbReference type="EC" id="2.4.1.90"/>
    </reaction>
    <physiologicalReaction direction="left-to-right" evidence="1">
        <dbReference type="Rhea" id="RHEA:17746"/>
    </physiologicalReaction>
</comment>
<comment type="catalytic activity">
    <reaction evidence="1">
        <text>a beta-D-GlcNAc-(1-&gt;3)-beta-D-Gal-(1-&gt;4)-beta-D-Glc-(1&lt;-&gt;1)-Cer(d18:1(4E)) + UDP-alpha-D-galactose = a neolactoside nLc4Cer(d18:1(4E)) + UDP + H(+)</text>
        <dbReference type="Rhea" id="RHEA:31499"/>
        <dbReference type="ChEBI" id="CHEBI:15378"/>
        <dbReference type="ChEBI" id="CHEBI:17006"/>
        <dbReference type="ChEBI" id="CHEBI:17103"/>
        <dbReference type="ChEBI" id="CHEBI:58223"/>
        <dbReference type="ChEBI" id="CHEBI:66914"/>
        <dbReference type="EC" id="2.4.1.275"/>
    </reaction>
    <physiologicalReaction direction="left-to-right" evidence="1">
        <dbReference type="Rhea" id="RHEA:31500"/>
    </physiologicalReaction>
</comment>
<comment type="catalytic activity">
    <reaction evidence="1">
        <text>a beta-D-glucosylceramide + UDP-alpha-D-galactose = a beta-D-galactosyl-(1-&gt;4)-beta-D-glucosyl-(1&lt;-&gt;1)-ceramide + UDP + H(+)</text>
        <dbReference type="Rhea" id="RHEA:62552"/>
        <dbReference type="ChEBI" id="CHEBI:15378"/>
        <dbReference type="ChEBI" id="CHEBI:58223"/>
        <dbReference type="ChEBI" id="CHEBI:66914"/>
        <dbReference type="ChEBI" id="CHEBI:79208"/>
        <dbReference type="ChEBI" id="CHEBI:83264"/>
    </reaction>
    <physiologicalReaction direction="left-to-right" evidence="1">
        <dbReference type="Rhea" id="RHEA:62553"/>
    </physiologicalReaction>
</comment>
<comment type="catalytic activity">
    <reaction evidence="1">
        <text>a neolactoside IV(3)-beta-GlcNAc-nLc4Cer + UDP-alpha-D-galactose = a neolactoside nLc6Cer + UDP + H(+)</text>
        <dbReference type="Rhea" id="RHEA:62548"/>
        <dbReference type="ChEBI" id="CHEBI:15378"/>
        <dbReference type="ChEBI" id="CHEBI:58223"/>
        <dbReference type="ChEBI" id="CHEBI:66914"/>
        <dbReference type="ChEBI" id="CHEBI:90357"/>
        <dbReference type="ChEBI" id="CHEBI:144378"/>
    </reaction>
    <physiologicalReaction direction="left-to-right" evidence="1">
        <dbReference type="Rhea" id="RHEA:62549"/>
    </physiologicalReaction>
</comment>
<comment type="cofactor">
    <cofactor evidence="2">
        <name>Mn(2+)</name>
        <dbReference type="ChEBI" id="CHEBI:29035"/>
    </cofactor>
</comment>
<comment type="pathway">
    <text>Protein modification; protein glycosylation.</text>
</comment>
<comment type="subcellular location">
    <subcellularLocation>
        <location evidence="3">Golgi apparatus</location>
        <location evidence="3">Golgi stack membrane</location>
        <topology>Single-pass type II membrane protein</topology>
    </subcellularLocation>
    <subcellularLocation>
        <location evidence="1">Secreted</location>
    </subcellularLocation>
    <subcellularLocation>
        <location evidence="1">Cell membrane</location>
        <topology evidence="1">Single-pass type II membrane protein</topology>
    </subcellularLocation>
    <subcellularLocation>
        <location evidence="3">Cell projection</location>
        <location evidence="3">Filopodium</location>
    </subcellularLocation>
    <text evidence="3">Membrane-bound form in trans cisternae of Golgi. Secreted into the body fluid.</text>
</comment>
<comment type="PTM">
    <text>The soluble form derives from the membrane form by proteolytic processing.</text>
</comment>
<comment type="similarity">
    <text evidence="4">Belongs to the glycosyltransferase 7 family.</text>
</comment>
<keyword id="KW-1003">Cell membrane</keyword>
<keyword id="KW-0966">Cell projection</keyword>
<keyword id="KW-0903">Direct protein sequencing</keyword>
<keyword id="KW-0328">Glycosyltransferase</keyword>
<keyword id="KW-0333">Golgi apparatus</keyword>
<keyword id="KW-0443">Lipid metabolism</keyword>
<keyword id="KW-0464">Manganese</keyword>
<keyword id="KW-0472">Membrane</keyword>
<keyword id="KW-0479">Metal-binding</keyword>
<keyword id="KW-1185">Reference proteome</keyword>
<keyword id="KW-0964">Secreted</keyword>
<keyword id="KW-0808">Transferase</keyword>
<accession>P80225</accession>